<keyword id="KW-1185">Reference proteome</keyword>
<accession>Q9UUD9</accession>
<proteinExistence type="predicted"/>
<feature type="chain" id="PRO_0000116866" description="Uncharacterized protein C17G9.13c">
    <location>
        <begin position="1"/>
        <end position="317"/>
    </location>
</feature>
<gene>
    <name type="ORF">SPBC17G9.13c</name>
</gene>
<sequence length="317" mass="37009">MRFISTVTKRRPFQAPNDLVHPLSNILGSLVTYDSRLHLPQPKDRQCSTLVPLYRRLLKATRRFWDPMASQILISHFQAYARKARKSNPNPHKRRIKRFRNLLKTFACRIERANDGDHQAIWQTLRYAYSQTGPLRHRRLHYLQDNKIRPSKIPKSLPSNSPVRLPYISSLLSAVFEINMENAKIRHLPSVIFDGLIEKNKDRPYHINLSCKRAYDELLPRIAVPLLPHEYHHLHSLLLDVTLRNPQISRPPFAPLNPRKGFCRILQRSLITFLSAVCYLPYNPHPTSKPVVSWDSLSDIQLRLNVGKVLKKSVKKR</sequence>
<reference key="1">
    <citation type="journal article" date="2002" name="Nature">
        <title>The genome sequence of Schizosaccharomyces pombe.</title>
        <authorList>
            <person name="Wood V."/>
            <person name="Gwilliam R."/>
            <person name="Rajandream M.A."/>
            <person name="Lyne M.H."/>
            <person name="Lyne R."/>
            <person name="Stewart A."/>
            <person name="Sgouros J.G."/>
            <person name="Peat N."/>
            <person name="Hayles J."/>
            <person name="Baker S.G."/>
            <person name="Basham D."/>
            <person name="Bowman S."/>
            <person name="Brooks K."/>
            <person name="Brown D."/>
            <person name="Brown S."/>
            <person name="Chillingworth T."/>
            <person name="Churcher C.M."/>
            <person name="Collins M."/>
            <person name="Connor R."/>
            <person name="Cronin A."/>
            <person name="Davis P."/>
            <person name="Feltwell T."/>
            <person name="Fraser A."/>
            <person name="Gentles S."/>
            <person name="Goble A."/>
            <person name="Hamlin N."/>
            <person name="Harris D.E."/>
            <person name="Hidalgo J."/>
            <person name="Hodgson G."/>
            <person name="Holroyd S."/>
            <person name="Hornsby T."/>
            <person name="Howarth S."/>
            <person name="Huckle E.J."/>
            <person name="Hunt S."/>
            <person name="Jagels K."/>
            <person name="James K.D."/>
            <person name="Jones L."/>
            <person name="Jones M."/>
            <person name="Leather S."/>
            <person name="McDonald S."/>
            <person name="McLean J."/>
            <person name="Mooney P."/>
            <person name="Moule S."/>
            <person name="Mungall K.L."/>
            <person name="Murphy L.D."/>
            <person name="Niblett D."/>
            <person name="Odell C."/>
            <person name="Oliver K."/>
            <person name="O'Neil S."/>
            <person name="Pearson D."/>
            <person name="Quail M.A."/>
            <person name="Rabbinowitsch E."/>
            <person name="Rutherford K.M."/>
            <person name="Rutter S."/>
            <person name="Saunders D."/>
            <person name="Seeger K."/>
            <person name="Sharp S."/>
            <person name="Skelton J."/>
            <person name="Simmonds M.N."/>
            <person name="Squares R."/>
            <person name="Squares S."/>
            <person name="Stevens K."/>
            <person name="Taylor K."/>
            <person name="Taylor R.G."/>
            <person name="Tivey A."/>
            <person name="Walsh S.V."/>
            <person name="Warren T."/>
            <person name="Whitehead S."/>
            <person name="Woodward J.R."/>
            <person name="Volckaert G."/>
            <person name="Aert R."/>
            <person name="Robben J."/>
            <person name="Grymonprez B."/>
            <person name="Weltjens I."/>
            <person name="Vanstreels E."/>
            <person name="Rieger M."/>
            <person name="Schaefer M."/>
            <person name="Mueller-Auer S."/>
            <person name="Gabel C."/>
            <person name="Fuchs M."/>
            <person name="Duesterhoeft A."/>
            <person name="Fritzc C."/>
            <person name="Holzer E."/>
            <person name="Moestl D."/>
            <person name="Hilbert H."/>
            <person name="Borzym K."/>
            <person name="Langer I."/>
            <person name="Beck A."/>
            <person name="Lehrach H."/>
            <person name="Reinhardt R."/>
            <person name="Pohl T.M."/>
            <person name="Eger P."/>
            <person name="Zimmermann W."/>
            <person name="Wedler H."/>
            <person name="Wambutt R."/>
            <person name="Purnelle B."/>
            <person name="Goffeau A."/>
            <person name="Cadieu E."/>
            <person name="Dreano S."/>
            <person name="Gloux S."/>
            <person name="Lelaure V."/>
            <person name="Mottier S."/>
            <person name="Galibert F."/>
            <person name="Aves S.J."/>
            <person name="Xiang Z."/>
            <person name="Hunt C."/>
            <person name="Moore K."/>
            <person name="Hurst S.M."/>
            <person name="Lucas M."/>
            <person name="Rochet M."/>
            <person name="Gaillardin C."/>
            <person name="Tallada V.A."/>
            <person name="Garzon A."/>
            <person name="Thode G."/>
            <person name="Daga R.R."/>
            <person name="Cruzado L."/>
            <person name="Jimenez J."/>
            <person name="Sanchez M."/>
            <person name="del Rey F."/>
            <person name="Benito J."/>
            <person name="Dominguez A."/>
            <person name="Revuelta J.L."/>
            <person name="Moreno S."/>
            <person name="Armstrong J."/>
            <person name="Forsburg S.L."/>
            <person name="Cerutti L."/>
            <person name="Lowe T."/>
            <person name="McCombie W.R."/>
            <person name="Paulsen I."/>
            <person name="Potashkin J."/>
            <person name="Shpakovski G.V."/>
            <person name="Ussery D."/>
            <person name="Barrell B.G."/>
            <person name="Nurse P."/>
        </authorList>
    </citation>
    <scope>NUCLEOTIDE SEQUENCE [LARGE SCALE GENOMIC DNA]</scope>
    <source>
        <strain>972 / ATCC 24843</strain>
    </source>
</reference>
<protein>
    <recommendedName>
        <fullName>Uncharacterized protein C17G9.13c</fullName>
    </recommendedName>
</protein>
<dbReference type="EMBL" id="CU329671">
    <property type="protein sequence ID" value="CAB52811.1"/>
    <property type="molecule type" value="Genomic_DNA"/>
</dbReference>
<dbReference type="PIR" id="T39736">
    <property type="entry name" value="T39736"/>
</dbReference>
<dbReference type="SMR" id="Q9UUD9"/>
<dbReference type="STRING" id="284812.Q9UUD9"/>
<dbReference type="iPTMnet" id="Q9UUD9"/>
<dbReference type="PaxDb" id="4896-SPBC17G9.13c.1"/>
<dbReference type="EnsemblFungi" id="SPBC17G9.13c.1">
    <property type="protein sequence ID" value="SPBC17G9.13c.1:pep"/>
    <property type="gene ID" value="SPBC17G9.13c"/>
</dbReference>
<dbReference type="KEGG" id="spo:2539657"/>
<dbReference type="PomBase" id="SPBC17G9.13c"/>
<dbReference type="VEuPathDB" id="FungiDB:SPBC17G9.13c"/>
<dbReference type="HOGENOM" id="CLU_877605_0_0_1"/>
<dbReference type="InParanoid" id="Q9UUD9"/>
<dbReference type="OMA" id="RINLCIA"/>
<dbReference type="PRO" id="PR:Q9UUD9"/>
<dbReference type="Proteomes" id="UP000002485">
    <property type="component" value="Chromosome II"/>
</dbReference>
<dbReference type="GO" id="GO:0005739">
    <property type="term" value="C:mitochondrion"/>
    <property type="evidence" value="ECO:0000314"/>
    <property type="project" value="PomBase"/>
</dbReference>
<dbReference type="GO" id="GO:0140053">
    <property type="term" value="P:mitochondrial gene expression"/>
    <property type="evidence" value="ECO:0000303"/>
    <property type="project" value="PomBase"/>
</dbReference>
<dbReference type="InterPro" id="IPR046896">
    <property type="entry name" value="Cup1-like_N"/>
</dbReference>
<dbReference type="Pfam" id="PF20263">
    <property type="entry name" value="LYRM2-like"/>
    <property type="match status" value="1"/>
</dbReference>
<name>YNZD_SCHPO</name>
<organism>
    <name type="scientific">Schizosaccharomyces pombe (strain 972 / ATCC 24843)</name>
    <name type="common">Fission yeast</name>
    <dbReference type="NCBI Taxonomy" id="284812"/>
    <lineage>
        <taxon>Eukaryota</taxon>
        <taxon>Fungi</taxon>
        <taxon>Dikarya</taxon>
        <taxon>Ascomycota</taxon>
        <taxon>Taphrinomycotina</taxon>
        <taxon>Schizosaccharomycetes</taxon>
        <taxon>Schizosaccharomycetales</taxon>
        <taxon>Schizosaccharomycetaceae</taxon>
        <taxon>Schizosaccharomyces</taxon>
    </lineage>
</organism>